<organism>
    <name type="scientific">Nitrosospira multiformis (strain ATCC 25196 / NCIMB 11849 / C 71)</name>
    <dbReference type="NCBI Taxonomy" id="323848"/>
    <lineage>
        <taxon>Bacteria</taxon>
        <taxon>Pseudomonadati</taxon>
        <taxon>Pseudomonadota</taxon>
        <taxon>Betaproteobacteria</taxon>
        <taxon>Nitrosomonadales</taxon>
        <taxon>Nitrosomonadaceae</taxon>
        <taxon>Nitrosospira</taxon>
    </lineage>
</organism>
<keyword id="KW-0067">ATP-binding</keyword>
<keyword id="KW-0238">DNA-binding</keyword>
<keyword id="KW-0479">Metal-binding</keyword>
<keyword id="KW-0547">Nucleotide-binding</keyword>
<keyword id="KW-1185">Reference proteome</keyword>
<keyword id="KW-0678">Repressor</keyword>
<keyword id="KW-0804">Transcription</keyword>
<keyword id="KW-0805">Transcription regulation</keyword>
<keyword id="KW-0862">Zinc</keyword>
<keyword id="KW-0863">Zinc-finger</keyword>
<gene>
    <name evidence="1" type="primary">nrdR</name>
    <name type="ordered locus">Nmul_A0005</name>
</gene>
<comment type="function">
    <text evidence="1">Negatively regulates transcription of bacterial ribonucleotide reductase nrd genes and operons by binding to NrdR-boxes.</text>
</comment>
<comment type="cofactor">
    <cofactor evidence="1">
        <name>Zn(2+)</name>
        <dbReference type="ChEBI" id="CHEBI:29105"/>
    </cofactor>
    <text evidence="1">Binds 1 zinc ion.</text>
</comment>
<comment type="similarity">
    <text evidence="1">Belongs to the NrdR family.</text>
</comment>
<accession>Q2YD57</accession>
<dbReference type="EMBL" id="CP000103">
    <property type="protein sequence ID" value="ABB73314.1"/>
    <property type="molecule type" value="Genomic_DNA"/>
</dbReference>
<dbReference type="RefSeq" id="WP_011379369.1">
    <property type="nucleotide sequence ID" value="NC_007614.1"/>
</dbReference>
<dbReference type="SMR" id="Q2YD57"/>
<dbReference type="STRING" id="323848.Nmul_A0005"/>
<dbReference type="KEGG" id="nmu:Nmul_A0005"/>
<dbReference type="eggNOG" id="COG1327">
    <property type="taxonomic scope" value="Bacteria"/>
</dbReference>
<dbReference type="HOGENOM" id="CLU_108412_0_1_4"/>
<dbReference type="OrthoDB" id="9807461at2"/>
<dbReference type="Proteomes" id="UP000002718">
    <property type="component" value="Chromosome"/>
</dbReference>
<dbReference type="GO" id="GO:0005524">
    <property type="term" value="F:ATP binding"/>
    <property type="evidence" value="ECO:0007669"/>
    <property type="project" value="UniProtKB-KW"/>
</dbReference>
<dbReference type="GO" id="GO:0003677">
    <property type="term" value="F:DNA binding"/>
    <property type="evidence" value="ECO:0007669"/>
    <property type="project" value="UniProtKB-KW"/>
</dbReference>
<dbReference type="GO" id="GO:0008270">
    <property type="term" value="F:zinc ion binding"/>
    <property type="evidence" value="ECO:0007669"/>
    <property type="project" value="UniProtKB-UniRule"/>
</dbReference>
<dbReference type="GO" id="GO:0045892">
    <property type="term" value="P:negative regulation of DNA-templated transcription"/>
    <property type="evidence" value="ECO:0007669"/>
    <property type="project" value="UniProtKB-UniRule"/>
</dbReference>
<dbReference type="HAMAP" id="MF_00440">
    <property type="entry name" value="NrdR"/>
    <property type="match status" value="1"/>
</dbReference>
<dbReference type="InterPro" id="IPR005144">
    <property type="entry name" value="ATP-cone_dom"/>
</dbReference>
<dbReference type="InterPro" id="IPR055173">
    <property type="entry name" value="NrdR-like_N"/>
</dbReference>
<dbReference type="InterPro" id="IPR003796">
    <property type="entry name" value="RNR_NrdR-like"/>
</dbReference>
<dbReference type="NCBIfam" id="TIGR00244">
    <property type="entry name" value="transcriptional regulator NrdR"/>
    <property type="match status" value="1"/>
</dbReference>
<dbReference type="PANTHER" id="PTHR30455">
    <property type="entry name" value="TRANSCRIPTIONAL REPRESSOR NRDR"/>
    <property type="match status" value="1"/>
</dbReference>
<dbReference type="PANTHER" id="PTHR30455:SF2">
    <property type="entry name" value="TRANSCRIPTIONAL REPRESSOR NRDR"/>
    <property type="match status" value="1"/>
</dbReference>
<dbReference type="Pfam" id="PF03477">
    <property type="entry name" value="ATP-cone"/>
    <property type="match status" value="1"/>
</dbReference>
<dbReference type="Pfam" id="PF22811">
    <property type="entry name" value="Zn_ribbon_NrdR"/>
    <property type="match status" value="1"/>
</dbReference>
<dbReference type="PROSITE" id="PS51161">
    <property type="entry name" value="ATP_CONE"/>
    <property type="match status" value="1"/>
</dbReference>
<name>NRDR_NITMU</name>
<reference key="1">
    <citation type="submission" date="2005-08" db="EMBL/GenBank/DDBJ databases">
        <title>Complete sequence of chromosome 1 of Nitrosospira multiformis ATCC 25196.</title>
        <authorList>
            <person name="Copeland A."/>
            <person name="Lucas S."/>
            <person name="Lapidus A."/>
            <person name="Barry K."/>
            <person name="Detter J.C."/>
            <person name="Glavina T."/>
            <person name="Hammon N."/>
            <person name="Israni S."/>
            <person name="Pitluck S."/>
            <person name="Chain P."/>
            <person name="Malfatti S."/>
            <person name="Shin M."/>
            <person name="Vergez L."/>
            <person name="Schmutz J."/>
            <person name="Larimer F."/>
            <person name="Land M."/>
            <person name="Hauser L."/>
            <person name="Kyrpides N."/>
            <person name="Lykidis A."/>
            <person name="Richardson P."/>
        </authorList>
    </citation>
    <scope>NUCLEOTIDE SEQUENCE [LARGE SCALE GENOMIC DNA]</scope>
    <source>
        <strain>ATCC 25196 / NCIMB 11849 / C 71</strain>
    </source>
</reference>
<protein>
    <recommendedName>
        <fullName evidence="1">Transcriptional repressor NrdR</fullName>
    </recommendedName>
</protein>
<proteinExistence type="inferred from homology"/>
<evidence type="ECO:0000255" key="1">
    <source>
        <dbReference type="HAMAP-Rule" id="MF_00440"/>
    </source>
</evidence>
<sequence>MKCPFCHTPDTSVIDSRVSEEGDRIRRRRRCPHCDKRFTTYETVELRLPQVVKQDGNRAEFDREKLRTGFVRALHKRPVSAEDVEAAMNRVVQKLLSLGEREIASHKIGEMVMGELYKLDKVAYIRFASVYRSFQGAADFDDAIRELQGSDSRKEPDKP</sequence>
<feature type="chain" id="PRO_0000230876" description="Transcriptional repressor NrdR">
    <location>
        <begin position="1"/>
        <end position="159"/>
    </location>
</feature>
<feature type="domain" description="ATP-cone" evidence="1">
    <location>
        <begin position="49"/>
        <end position="139"/>
    </location>
</feature>
<feature type="zinc finger region" evidence="1">
    <location>
        <begin position="3"/>
        <end position="34"/>
    </location>
</feature>